<gene>
    <name evidence="1" type="primary">mukF</name>
    <name type="ordered locus">STY0994</name>
    <name type="ordered locus">t1942</name>
</gene>
<name>MUKF_SALTI</name>
<dbReference type="EMBL" id="AL513382">
    <property type="protein sequence ID" value="CAD05392.1"/>
    <property type="molecule type" value="Genomic_DNA"/>
</dbReference>
<dbReference type="EMBL" id="AE014613">
    <property type="protein sequence ID" value="AAO69557.1"/>
    <property type="molecule type" value="Genomic_DNA"/>
</dbReference>
<dbReference type="RefSeq" id="NP_455478.1">
    <property type="nucleotide sequence ID" value="NC_003198.1"/>
</dbReference>
<dbReference type="RefSeq" id="WP_001288827.1">
    <property type="nucleotide sequence ID" value="NZ_WSUR01000013.1"/>
</dbReference>
<dbReference type="SMR" id="Q8Z7Z7"/>
<dbReference type="STRING" id="220341.gene:17584983"/>
<dbReference type="KEGG" id="stt:t1942"/>
<dbReference type="KEGG" id="sty:STY0994"/>
<dbReference type="PATRIC" id="fig|220341.7.peg.1002"/>
<dbReference type="eggNOG" id="COG3006">
    <property type="taxonomic scope" value="Bacteria"/>
</dbReference>
<dbReference type="HOGENOM" id="CLU_049853_0_0_6"/>
<dbReference type="OMA" id="TKDWQAA"/>
<dbReference type="OrthoDB" id="6450805at2"/>
<dbReference type="Proteomes" id="UP000000541">
    <property type="component" value="Chromosome"/>
</dbReference>
<dbReference type="Proteomes" id="UP000002670">
    <property type="component" value="Chromosome"/>
</dbReference>
<dbReference type="GO" id="GO:0005737">
    <property type="term" value="C:cytoplasm"/>
    <property type="evidence" value="ECO:0007669"/>
    <property type="project" value="UniProtKB-UniRule"/>
</dbReference>
<dbReference type="GO" id="GO:0009295">
    <property type="term" value="C:nucleoid"/>
    <property type="evidence" value="ECO:0007669"/>
    <property type="project" value="UniProtKB-SubCell"/>
</dbReference>
<dbReference type="GO" id="GO:0005509">
    <property type="term" value="F:calcium ion binding"/>
    <property type="evidence" value="ECO:0007669"/>
    <property type="project" value="UniProtKB-UniRule"/>
</dbReference>
<dbReference type="GO" id="GO:0051301">
    <property type="term" value="P:cell division"/>
    <property type="evidence" value="ECO:0007669"/>
    <property type="project" value="UniProtKB-KW"/>
</dbReference>
<dbReference type="GO" id="GO:0030261">
    <property type="term" value="P:chromosome condensation"/>
    <property type="evidence" value="ECO:0007669"/>
    <property type="project" value="UniProtKB-KW"/>
</dbReference>
<dbReference type="GO" id="GO:0007059">
    <property type="term" value="P:chromosome segregation"/>
    <property type="evidence" value="ECO:0007669"/>
    <property type="project" value="UniProtKB-UniRule"/>
</dbReference>
<dbReference type="GO" id="GO:0006260">
    <property type="term" value="P:DNA replication"/>
    <property type="evidence" value="ECO:0007669"/>
    <property type="project" value="UniProtKB-UniRule"/>
</dbReference>
<dbReference type="CDD" id="cd16337">
    <property type="entry name" value="MukF_C"/>
    <property type="match status" value="1"/>
</dbReference>
<dbReference type="CDD" id="cd16335">
    <property type="entry name" value="MukF_N"/>
    <property type="match status" value="1"/>
</dbReference>
<dbReference type="Gene3D" id="1.20.58.590">
    <property type="entry name" value="Chromosome partition protein MukF, middle domain"/>
    <property type="match status" value="1"/>
</dbReference>
<dbReference type="Gene3D" id="1.10.225.40">
    <property type="entry name" value="MukF, C-terminal domain"/>
    <property type="match status" value="1"/>
</dbReference>
<dbReference type="Gene3D" id="1.10.10.10">
    <property type="entry name" value="Winged helix-like DNA-binding domain superfamily/Winged helix DNA-binding domain"/>
    <property type="match status" value="1"/>
</dbReference>
<dbReference type="HAMAP" id="MF_01803">
    <property type="entry name" value="MukF"/>
    <property type="match status" value="1"/>
</dbReference>
<dbReference type="InterPro" id="IPR005582">
    <property type="entry name" value="Chromosome_partition_MukF"/>
</dbReference>
<dbReference type="InterPro" id="IPR033441">
    <property type="entry name" value="MukF_C"/>
</dbReference>
<dbReference type="InterPro" id="IPR038198">
    <property type="entry name" value="MukF_C_sf"/>
</dbReference>
<dbReference type="InterPro" id="IPR033440">
    <property type="entry name" value="MukF_M"/>
</dbReference>
<dbReference type="InterPro" id="IPR036141">
    <property type="entry name" value="MukF_M_sp"/>
</dbReference>
<dbReference type="InterPro" id="IPR033439">
    <property type="entry name" value="MukF_WHTH"/>
</dbReference>
<dbReference type="InterPro" id="IPR036388">
    <property type="entry name" value="WH-like_DNA-bd_sf"/>
</dbReference>
<dbReference type="InterPro" id="IPR036390">
    <property type="entry name" value="WH_DNA-bd_sf"/>
</dbReference>
<dbReference type="NCBIfam" id="NF003615">
    <property type="entry name" value="PRK05260.1"/>
    <property type="match status" value="1"/>
</dbReference>
<dbReference type="Pfam" id="PF03882">
    <property type="entry name" value="KicB"/>
    <property type="match status" value="1"/>
</dbReference>
<dbReference type="Pfam" id="PF17193">
    <property type="entry name" value="MukF_C"/>
    <property type="match status" value="1"/>
</dbReference>
<dbReference type="Pfam" id="PF17192">
    <property type="entry name" value="MukF_M"/>
    <property type="match status" value="1"/>
</dbReference>
<dbReference type="PIRSF" id="PIRSF018282">
    <property type="entry name" value="MukF"/>
    <property type="match status" value="1"/>
</dbReference>
<dbReference type="SUPFAM" id="SSF140570">
    <property type="entry name" value="MukF C-terminal domain-like"/>
    <property type="match status" value="1"/>
</dbReference>
<dbReference type="SUPFAM" id="SSF46785">
    <property type="entry name" value="Winged helix' DNA-binding domain"/>
    <property type="match status" value="1"/>
</dbReference>
<evidence type="ECO:0000255" key="1">
    <source>
        <dbReference type="HAMAP-Rule" id="MF_01803"/>
    </source>
</evidence>
<reference key="1">
    <citation type="journal article" date="2001" name="Nature">
        <title>Complete genome sequence of a multiple drug resistant Salmonella enterica serovar Typhi CT18.</title>
        <authorList>
            <person name="Parkhill J."/>
            <person name="Dougan G."/>
            <person name="James K.D."/>
            <person name="Thomson N.R."/>
            <person name="Pickard D."/>
            <person name="Wain J."/>
            <person name="Churcher C.M."/>
            <person name="Mungall K.L."/>
            <person name="Bentley S.D."/>
            <person name="Holden M.T.G."/>
            <person name="Sebaihia M."/>
            <person name="Baker S."/>
            <person name="Basham D."/>
            <person name="Brooks K."/>
            <person name="Chillingworth T."/>
            <person name="Connerton P."/>
            <person name="Cronin A."/>
            <person name="Davis P."/>
            <person name="Davies R.M."/>
            <person name="Dowd L."/>
            <person name="White N."/>
            <person name="Farrar J."/>
            <person name="Feltwell T."/>
            <person name="Hamlin N."/>
            <person name="Haque A."/>
            <person name="Hien T.T."/>
            <person name="Holroyd S."/>
            <person name="Jagels K."/>
            <person name="Krogh A."/>
            <person name="Larsen T.S."/>
            <person name="Leather S."/>
            <person name="Moule S."/>
            <person name="O'Gaora P."/>
            <person name="Parry C."/>
            <person name="Quail M.A."/>
            <person name="Rutherford K.M."/>
            <person name="Simmonds M."/>
            <person name="Skelton J."/>
            <person name="Stevens K."/>
            <person name="Whitehead S."/>
            <person name="Barrell B.G."/>
        </authorList>
    </citation>
    <scope>NUCLEOTIDE SEQUENCE [LARGE SCALE GENOMIC DNA]</scope>
    <source>
        <strain>CT18</strain>
    </source>
</reference>
<reference key="2">
    <citation type="journal article" date="2003" name="J. Bacteriol.">
        <title>Comparative genomics of Salmonella enterica serovar Typhi strains Ty2 and CT18.</title>
        <authorList>
            <person name="Deng W."/>
            <person name="Liou S.-R."/>
            <person name="Plunkett G. III"/>
            <person name="Mayhew G.F."/>
            <person name="Rose D.J."/>
            <person name="Burland V."/>
            <person name="Kodoyianni V."/>
            <person name="Schwartz D.C."/>
            <person name="Blattner F.R."/>
        </authorList>
    </citation>
    <scope>NUCLEOTIDE SEQUENCE [LARGE SCALE GENOMIC DNA]</scope>
    <source>
        <strain>ATCC 700931 / Ty2</strain>
    </source>
</reference>
<proteinExistence type="inferred from homology"/>
<organism>
    <name type="scientific">Salmonella typhi</name>
    <dbReference type="NCBI Taxonomy" id="90370"/>
    <lineage>
        <taxon>Bacteria</taxon>
        <taxon>Pseudomonadati</taxon>
        <taxon>Pseudomonadota</taxon>
        <taxon>Gammaproteobacteria</taxon>
        <taxon>Enterobacterales</taxon>
        <taxon>Enterobacteriaceae</taxon>
        <taxon>Salmonella</taxon>
    </lineage>
</organism>
<sequence length="440" mass="50475">MSEFSQTVPELVAWARKNDFSISLPVDRLSFLLAVATLNGERLDGEMSEGELVDAFRHVSDAFEQTSETIGVRANNAINDMVRQRLLNRFTSEQAEGNAIYRLTPLGIGITDYYIRQREFSTLRLSMQLSIVAGELKRAADAAAEGGDEFHWHRNVYAPLKYSVAEIFDSIDLTQRIMDEQQQQVKDDIAQLLNKDWRAAISSCELLLSETSGTLRELQDTLEAAGDKLQANLLRIQDATMTHDDLHFVDRLVFDLQSKLDRIISWGQQSIDLWIGYDRHVHKFIRTAIDMDKNRIFAQRLRQSVQTYFDDPWALTYANADRLLDMRDEEMALRDDEVTGELPPDLEYEEFNEIREQLAAIIEEQLAIYKTRQTPLDLGLVVREYLAQYPRARHFDVARIVIDQAVRLGVAQADFTGLPAKWQPINDYGAKVQAHVIDKY</sequence>
<feature type="chain" id="PRO_0000211609" description="Chromosome partition protein MukF">
    <location>
        <begin position="1"/>
        <end position="440"/>
    </location>
</feature>
<feature type="region of interest" description="Leucine-zipper">
    <location>
        <begin position="208"/>
        <end position="236"/>
    </location>
</feature>
<keyword id="KW-0106">Calcium</keyword>
<keyword id="KW-0131">Cell cycle</keyword>
<keyword id="KW-0132">Cell division</keyword>
<keyword id="KW-0159">Chromosome partition</keyword>
<keyword id="KW-0963">Cytoplasm</keyword>
<keyword id="KW-0226">DNA condensation</keyword>
<accession>Q8Z7Z7</accession>
<protein>
    <recommendedName>
        <fullName evidence="1">Chromosome partition protein MukF</fullName>
    </recommendedName>
</protein>
<comment type="function">
    <text evidence="1">Involved in chromosome condensation, segregation and cell cycle progression. May participate in facilitating chromosome segregation by condensation DNA from both sides of a centrally located replisome during cell division. Not required for mini-F plasmid partitioning. Probably acts via its interaction with MukB and MukE. Overexpression results in anucleate cells. It has a calcium binding activity.</text>
</comment>
<comment type="subunit">
    <text evidence="1">Interacts, and probably forms a ternary complex, with MukE and MukB via its C-terminal region. The complex formation is stimulated by calcium or magnesium. It is required for an interaction between MukE and MukB.</text>
</comment>
<comment type="subcellular location">
    <subcellularLocation>
        <location evidence="1">Cytoplasm</location>
        <location evidence="1">Nucleoid</location>
    </subcellularLocation>
    <text evidence="1">Restricted to the nucleoid region.</text>
</comment>
<comment type="similarity">
    <text evidence="1">Belongs to the MukF family.</text>
</comment>